<accession>Q0JF01</accession>
<accession>A0A0P0W6Z1</accession>
<accession>A3ARJ3</accession>
<accession>B7EK40</accession>
<accession>Q5JQE4</accession>
<organism>
    <name type="scientific">Oryza sativa subsp. japonica</name>
    <name type="common">Rice</name>
    <dbReference type="NCBI Taxonomy" id="39947"/>
    <lineage>
        <taxon>Eukaryota</taxon>
        <taxon>Viridiplantae</taxon>
        <taxon>Streptophyta</taxon>
        <taxon>Embryophyta</taxon>
        <taxon>Tracheophyta</taxon>
        <taxon>Spermatophyta</taxon>
        <taxon>Magnoliopsida</taxon>
        <taxon>Liliopsida</taxon>
        <taxon>Poales</taxon>
        <taxon>Poaceae</taxon>
        <taxon>BOP clade</taxon>
        <taxon>Oryzoideae</taxon>
        <taxon>Oryzeae</taxon>
        <taxon>Oryzinae</taxon>
        <taxon>Oryza</taxon>
        <taxon>Oryza sativa</taxon>
    </lineage>
</organism>
<evidence type="ECO:0000250" key="1"/>
<evidence type="ECO:0000255" key="2"/>
<evidence type="ECO:0000269" key="3">
    <source>
    </source>
</evidence>
<evidence type="ECO:0000269" key="4">
    <source>
    </source>
</evidence>
<evidence type="ECO:0000305" key="5"/>
<comment type="function">
    <text evidence="3 4">Involved in momilactone phytoalexins biosynthesis; acts as a multifunctional diterpene oxidase. Participates in the biosynthetic steps between 9-beta-pimara-7,15-diene and 3-beta-hydroxy-9-beta-pimara-7,15-dien-19,6-beta-olide. Also catalyzes consecutive oxidations at C19 of syn-stemod-13(17)-ene.</text>
</comment>
<comment type="catalytic activity">
    <reaction evidence="4">
        <text>9beta-pimara-7,15-diene + 3 reduced [NADPH--hemoprotein reductase] + 3 O2 = 9beta-pimara-7,15-dien-19-oate + 3 oxidized [NADPH--hemoprotein reductase] + 4 H2O + 4 H(+)</text>
        <dbReference type="Rhea" id="RHEA:31951"/>
        <dbReference type="Rhea" id="RHEA-COMP:11964"/>
        <dbReference type="Rhea" id="RHEA-COMP:11965"/>
        <dbReference type="ChEBI" id="CHEBI:15377"/>
        <dbReference type="ChEBI" id="CHEBI:15378"/>
        <dbReference type="ChEBI" id="CHEBI:15379"/>
        <dbReference type="ChEBI" id="CHEBI:50067"/>
        <dbReference type="ChEBI" id="CHEBI:57618"/>
        <dbReference type="ChEBI" id="CHEBI:58210"/>
        <dbReference type="ChEBI" id="CHEBI:63659"/>
        <dbReference type="EC" id="1.14.14.111"/>
    </reaction>
</comment>
<comment type="cofactor">
    <cofactor evidence="1">
        <name>heme</name>
        <dbReference type="ChEBI" id="CHEBI:30413"/>
    </cofactor>
</comment>
<comment type="biophysicochemical properties">
    <kinetics>
        <KM evidence="4">2 uM for syn-pimaradiene</KM>
        <KM evidence="4">9 uM for syn-stemodene</KM>
        <text evidence="4">kcat is 46 sec(-1) with syn-pimaradiene as substrate and 49 sec(-1) with syn-stemodene as substrate.</text>
    </kinetics>
</comment>
<comment type="subcellular location">
    <subcellularLocation>
        <location evidence="5">Membrane</location>
        <topology evidence="5">Multi-pass membrane protein</topology>
    </subcellularLocation>
</comment>
<comment type="induction">
    <text evidence="3 4">By chitin oligosaccharide elicitor and jasmonic acid (MeJA).</text>
</comment>
<comment type="miscellaneous">
    <text>3-beta-hydroxy-9-beta-pimara-7,15-dien-19,6-beta-olide is a precursor of the phytoalexins momilactones A and B. Phytoalexins are diterpenoid secondary metabolites involved in the defense mechanism of the plant and produced in response to attack (by a pathogen, elicitor or UV irradiation). Momilactone B can also act as an allochemical (an antimicrobial and allelopathic agent), being constitutively produced in the root of the plant and secreted to the rhizosphere where it suppresses the growth of neighboring plants and soil microorganisms.</text>
</comment>
<comment type="similarity">
    <text evidence="5">Belongs to the cytochrome P450 family.</text>
</comment>
<comment type="sequence caution" evidence="5">
    <conflict type="erroneous initiation">
        <sequence resource="EMBL-CDS" id="CAE04106"/>
    </conflict>
    <text>Truncated N-terminus.</text>
</comment>
<comment type="sequence caution" evidence="5">
    <conflict type="erroneous initiation">
        <sequence resource="EMBL-CDS" id="EAZ29932"/>
    </conflict>
    <text>Truncated N-terminus.</text>
</comment>
<comment type="online information" name="Cytochrome P450 Homepage">
    <link uri="https://drnelson.uthsc.edu/"/>
</comment>
<name>C99A3_ORYSJ</name>
<proteinExistence type="evidence at protein level"/>
<sequence length="502" mass="55892">MMEINSEATVTLVSVVTLPILLALLTRKSSSKKRRPPGPWNLPLVGGLLHLLRSQPQVALRDLAGKYGPVMFLRTGQVDTVVISSPAAAQEVLRDKDVTFASRPSLLVSEIFCYGNLDIGFAPYGAYWRMLRKLCTVELLSTKMVRQLAPIRDGETLALVRNIEAAAGGKKPFTLATLLISCTNTFTAKAAFGQACGGELQEQFLTALDEALKFSNGFCFGDLFPSLRFIDAMTGLRSRLERLRLQLDTVFDKIVAQCESNPGDSLVNVLLRIKDQGELDFPFSSTHVKAIILDMFTGGTETTSSTTEWLMSELMRNPEVMAKVQAEVRGVFDNKSPQDHEGLLENLSYMKLVIKETLRLNPVLPLLLPHLCRETCEIGGYEIVEGTRVLINSWAMARSPEYWDDAEKFIPERFEDGTADFKGSRFEYLPFGTGRRRCPGDIFAMATLELIVARLLYYFDWSLPDGMQPGDIDMELVVGATARRKNHLQLVASPYKPISMQS</sequence>
<protein>
    <recommendedName>
        <fullName>9-beta-pimara-7,15-diene oxidase</fullName>
        <ecNumber evidence="4">1.14.14.111</ecNumber>
    </recommendedName>
    <alternativeName>
        <fullName>Cytochrome P450 99A3</fullName>
    </alternativeName>
</protein>
<gene>
    <name type="primary">CYP99A3</name>
    <name type="ordered locus">Os04g0178400</name>
    <name type="ordered locus">LOC_Os04g09920</name>
    <name type="ORF">OsJ_013415</name>
    <name type="ORF">OSJNBa0096F01.14</name>
</gene>
<keyword id="KW-0349">Heme</keyword>
<keyword id="KW-0408">Iron</keyword>
<keyword id="KW-0472">Membrane</keyword>
<keyword id="KW-0479">Metal-binding</keyword>
<keyword id="KW-0503">Monooxygenase</keyword>
<keyword id="KW-0560">Oxidoreductase</keyword>
<keyword id="KW-0611">Plant defense</keyword>
<keyword id="KW-1185">Reference proteome</keyword>
<keyword id="KW-0812">Transmembrane</keyword>
<keyword id="KW-1133">Transmembrane helix</keyword>
<dbReference type="EC" id="1.14.14.111" evidence="4"/>
<dbReference type="EMBL" id="AL662933">
    <property type="protein sequence ID" value="CAE04106.1"/>
    <property type="status" value="ALT_INIT"/>
    <property type="molecule type" value="Genomic_DNA"/>
</dbReference>
<dbReference type="EMBL" id="AP008210">
    <property type="protein sequence ID" value="BAF14086.1"/>
    <property type="molecule type" value="Genomic_DNA"/>
</dbReference>
<dbReference type="EMBL" id="AP014960">
    <property type="protein sequence ID" value="BAS87950.1"/>
    <property type="molecule type" value="Genomic_DNA"/>
</dbReference>
<dbReference type="EMBL" id="CM000141">
    <property type="protein sequence ID" value="EAZ29932.1"/>
    <property type="status" value="ALT_INIT"/>
    <property type="molecule type" value="Genomic_DNA"/>
</dbReference>
<dbReference type="EMBL" id="AK071864">
    <property type="protein sequence ID" value="BAG92737.1"/>
    <property type="molecule type" value="mRNA"/>
</dbReference>
<dbReference type="RefSeq" id="XP_015634021.1">
    <property type="nucleotide sequence ID" value="XM_015778535.1"/>
</dbReference>
<dbReference type="SMR" id="Q0JF01"/>
<dbReference type="FunCoup" id="Q0JF01">
    <property type="interactions" value="60"/>
</dbReference>
<dbReference type="STRING" id="39947.Q0JF01"/>
<dbReference type="PaxDb" id="39947-Q0JF01"/>
<dbReference type="EnsemblPlants" id="Os04t0178400-01">
    <property type="protein sequence ID" value="Os04t0178400-01"/>
    <property type="gene ID" value="Os04g0178400"/>
</dbReference>
<dbReference type="Gramene" id="Os04t0178400-01">
    <property type="protein sequence ID" value="Os04t0178400-01"/>
    <property type="gene ID" value="Os04g0178400"/>
</dbReference>
<dbReference type="KEGG" id="dosa:Os04g0178400"/>
<dbReference type="eggNOG" id="KOG0156">
    <property type="taxonomic scope" value="Eukaryota"/>
</dbReference>
<dbReference type="HOGENOM" id="CLU_001570_4_1_1"/>
<dbReference type="InParanoid" id="Q0JF01"/>
<dbReference type="OMA" id="LINSWAM"/>
<dbReference type="OrthoDB" id="1470350at2759"/>
<dbReference type="BioCyc" id="MetaCyc:MONOMER-18613"/>
<dbReference type="BRENDA" id="1.14.14.111">
    <property type="organism ID" value="4460"/>
</dbReference>
<dbReference type="SABIO-RK" id="Q0JF01"/>
<dbReference type="Proteomes" id="UP000000763">
    <property type="component" value="Chromosome 4"/>
</dbReference>
<dbReference type="Proteomes" id="UP000007752">
    <property type="component" value="Chromosome 4"/>
</dbReference>
<dbReference type="Proteomes" id="UP000059680">
    <property type="component" value="Chromosome 4"/>
</dbReference>
<dbReference type="GO" id="GO:0016020">
    <property type="term" value="C:membrane"/>
    <property type="evidence" value="ECO:0007669"/>
    <property type="project" value="UniProtKB-SubCell"/>
</dbReference>
<dbReference type="GO" id="GO:0036209">
    <property type="term" value="F:9beta-pimara-7,15-diene oxidase activity"/>
    <property type="evidence" value="ECO:0000314"/>
    <property type="project" value="UniProtKB"/>
</dbReference>
<dbReference type="GO" id="GO:0020037">
    <property type="term" value="F:heme binding"/>
    <property type="evidence" value="ECO:0007669"/>
    <property type="project" value="InterPro"/>
</dbReference>
<dbReference type="GO" id="GO:0005506">
    <property type="term" value="F:iron ion binding"/>
    <property type="evidence" value="ECO:0007669"/>
    <property type="project" value="InterPro"/>
</dbReference>
<dbReference type="GO" id="GO:0016491">
    <property type="term" value="F:oxidoreductase activity"/>
    <property type="evidence" value="ECO:0000314"/>
    <property type="project" value="UniProtKB"/>
</dbReference>
<dbReference type="GO" id="GO:0071395">
    <property type="term" value="P:cellular response to jasmonic acid stimulus"/>
    <property type="evidence" value="ECO:0000270"/>
    <property type="project" value="UniProtKB"/>
</dbReference>
<dbReference type="GO" id="GO:0006952">
    <property type="term" value="P:defense response"/>
    <property type="evidence" value="ECO:0007669"/>
    <property type="project" value="UniProtKB-KW"/>
</dbReference>
<dbReference type="GO" id="GO:0016101">
    <property type="term" value="P:diterpenoid metabolic process"/>
    <property type="evidence" value="ECO:0000314"/>
    <property type="project" value="UniProtKB"/>
</dbReference>
<dbReference type="CDD" id="cd11072">
    <property type="entry name" value="CYP71-like"/>
    <property type="match status" value="1"/>
</dbReference>
<dbReference type="FunFam" id="1.10.630.10:FF:000043">
    <property type="entry name" value="Cytochrome P450 99A2"/>
    <property type="match status" value="1"/>
</dbReference>
<dbReference type="Gene3D" id="1.10.630.10">
    <property type="entry name" value="Cytochrome P450"/>
    <property type="match status" value="1"/>
</dbReference>
<dbReference type="InterPro" id="IPR001128">
    <property type="entry name" value="Cyt_P450"/>
</dbReference>
<dbReference type="InterPro" id="IPR017972">
    <property type="entry name" value="Cyt_P450_CS"/>
</dbReference>
<dbReference type="InterPro" id="IPR002401">
    <property type="entry name" value="Cyt_P450_E_grp-I"/>
</dbReference>
<dbReference type="InterPro" id="IPR036396">
    <property type="entry name" value="Cyt_P450_sf"/>
</dbReference>
<dbReference type="PANTHER" id="PTHR47955:SF8">
    <property type="entry name" value="CYTOCHROME P450 71D11-LIKE"/>
    <property type="match status" value="1"/>
</dbReference>
<dbReference type="PANTHER" id="PTHR47955">
    <property type="entry name" value="CYTOCHROME P450 FAMILY 71 PROTEIN"/>
    <property type="match status" value="1"/>
</dbReference>
<dbReference type="Pfam" id="PF00067">
    <property type="entry name" value="p450"/>
    <property type="match status" value="1"/>
</dbReference>
<dbReference type="PRINTS" id="PR00463">
    <property type="entry name" value="EP450I"/>
</dbReference>
<dbReference type="PRINTS" id="PR00385">
    <property type="entry name" value="P450"/>
</dbReference>
<dbReference type="SUPFAM" id="SSF48264">
    <property type="entry name" value="Cytochrome P450"/>
    <property type="match status" value="1"/>
</dbReference>
<dbReference type="PROSITE" id="PS00086">
    <property type="entry name" value="CYTOCHROME_P450"/>
    <property type="match status" value="1"/>
</dbReference>
<reference key="1">
    <citation type="journal article" date="2002" name="Nature">
        <title>Sequence and analysis of rice chromosome 4.</title>
        <authorList>
            <person name="Feng Q."/>
            <person name="Zhang Y."/>
            <person name="Hao P."/>
            <person name="Wang S."/>
            <person name="Fu G."/>
            <person name="Huang Y."/>
            <person name="Li Y."/>
            <person name="Zhu J."/>
            <person name="Liu Y."/>
            <person name="Hu X."/>
            <person name="Jia P."/>
            <person name="Zhang Y."/>
            <person name="Zhao Q."/>
            <person name="Ying K."/>
            <person name="Yu S."/>
            <person name="Tang Y."/>
            <person name="Weng Q."/>
            <person name="Zhang L."/>
            <person name="Lu Y."/>
            <person name="Mu J."/>
            <person name="Lu Y."/>
            <person name="Zhang L.S."/>
            <person name="Yu Z."/>
            <person name="Fan D."/>
            <person name="Liu X."/>
            <person name="Lu T."/>
            <person name="Li C."/>
            <person name="Wu Y."/>
            <person name="Sun T."/>
            <person name="Lei H."/>
            <person name="Li T."/>
            <person name="Hu H."/>
            <person name="Guan J."/>
            <person name="Wu M."/>
            <person name="Zhang R."/>
            <person name="Zhou B."/>
            <person name="Chen Z."/>
            <person name="Chen L."/>
            <person name="Jin Z."/>
            <person name="Wang R."/>
            <person name="Yin H."/>
            <person name="Cai Z."/>
            <person name="Ren S."/>
            <person name="Lv G."/>
            <person name="Gu W."/>
            <person name="Zhu G."/>
            <person name="Tu Y."/>
            <person name="Jia J."/>
            <person name="Zhang Y."/>
            <person name="Chen J."/>
            <person name="Kang H."/>
            <person name="Chen X."/>
            <person name="Shao C."/>
            <person name="Sun Y."/>
            <person name="Hu Q."/>
            <person name="Zhang X."/>
            <person name="Zhang W."/>
            <person name="Wang L."/>
            <person name="Ding C."/>
            <person name="Sheng H."/>
            <person name="Gu J."/>
            <person name="Chen S."/>
            <person name="Ni L."/>
            <person name="Zhu F."/>
            <person name="Chen W."/>
            <person name="Lan L."/>
            <person name="Lai Y."/>
            <person name="Cheng Z."/>
            <person name="Gu M."/>
            <person name="Jiang J."/>
            <person name="Li J."/>
            <person name="Hong G."/>
            <person name="Xue Y."/>
            <person name="Han B."/>
        </authorList>
    </citation>
    <scope>NUCLEOTIDE SEQUENCE [LARGE SCALE GENOMIC DNA]</scope>
    <source>
        <strain>cv. Nipponbare</strain>
    </source>
</reference>
<reference key="2">
    <citation type="journal article" date="2005" name="Nature">
        <title>The map-based sequence of the rice genome.</title>
        <authorList>
            <consortium name="International rice genome sequencing project (IRGSP)"/>
        </authorList>
    </citation>
    <scope>NUCLEOTIDE SEQUENCE [LARGE SCALE GENOMIC DNA]</scope>
    <source>
        <strain>cv. Nipponbare</strain>
    </source>
</reference>
<reference key="3">
    <citation type="journal article" date="2008" name="Nucleic Acids Res.">
        <title>The rice annotation project database (RAP-DB): 2008 update.</title>
        <authorList>
            <consortium name="The rice annotation project (RAP)"/>
        </authorList>
    </citation>
    <scope>GENOME REANNOTATION</scope>
    <source>
        <strain>cv. Nipponbare</strain>
    </source>
</reference>
<reference key="4">
    <citation type="journal article" date="2013" name="Rice">
        <title>Improvement of the Oryza sativa Nipponbare reference genome using next generation sequence and optical map data.</title>
        <authorList>
            <person name="Kawahara Y."/>
            <person name="de la Bastide M."/>
            <person name="Hamilton J.P."/>
            <person name="Kanamori H."/>
            <person name="McCombie W.R."/>
            <person name="Ouyang S."/>
            <person name="Schwartz D.C."/>
            <person name="Tanaka T."/>
            <person name="Wu J."/>
            <person name="Zhou S."/>
            <person name="Childs K.L."/>
            <person name="Davidson R.M."/>
            <person name="Lin H."/>
            <person name="Quesada-Ocampo L."/>
            <person name="Vaillancourt B."/>
            <person name="Sakai H."/>
            <person name="Lee S.S."/>
            <person name="Kim J."/>
            <person name="Numa H."/>
            <person name="Itoh T."/>
            <person name="Buell C.R."/>
            <person name="Matsumoto T."/>
        </authorList>
    </citation>
    <scope>GENOME REANNOTATION</scope>
    <source>
        <strain>cv. Nipponbare</strain>
    </source>
</reference>
<reference key="5">
    <citation type="journal article" date="2005" name="PLoS Biol.">
        <title>The genomes of Oryza sativa: a history of duplications.</title>
        <authorList>
            <person name="Yu J."/>
            <person name="Wang J."/>
            <person name="Lin W."/>
            <person name="Li S."/>
            <person name="Li H."/>
            <person name="Zhou J."/>
            <person name="Ni P."/>
            <person name="Dong W."/>
            <person name="Hu S."/>
            <person name="Zeng C."/>
            <person name="Zhang J."/>
            <person name="Zhang Y."/>
            <person name="Li R."/>
            <person name="Xu Z."/>
            <person name="Li S."/>
            <person name="Li X."/>
            <person name="Zheng H."/>
            <person name="Cong L."/>
            <person name="Lin L."/>
            <person name="Yin J."/>
            <person name="Geng J."/>
            <person name="Li G."/>
            <person name="Shi J."/>
            <person name="Liu J."/>
            <person name="Lv H."/>
            <person name="Li J."/>
            <person name="Wang J."/>
            <person name="Deng Y."/>
            <person name="Ran L."/>
            <person name="Shi X."/>
            <person name="Wang X."/>
            <person name="Wu Q."/>
            <person name="Li C."/>
            <person name="Ren X."/>
            <person name="Wang J."/>
            <person name="Wang X."/>
            <person name="Li D."/>
            <person name="Liu D."/>
            <person name="Zhang X."/>
            <person name="Ji Z."/>
            <person name="Zhao W."/>
            <person name="Sun Y."/>
            <person name="Zhang Z."/>
            <person name="Bao J."/>
            <person name="Han Y."/>
            <person name="Dong L."/>
            <person name="Ji J."/>
            <person name="Chen P."/>
            <person name="Wu S."/>
            <person name="Liu J."/>
            <person name="Xiao Y."/>
            <person name="Bu D."/>
            <person name="Tan J."/>
            <person name="Yang L."/>
            <person name="Ye C."/>
            <person name="Zhang J."/>
            <person name="Xu J."/>
            <person name="Zhou Y."/>
            <person name="Yu Y."/>
            <person name="Zhang B."/>
            <person name="Zhuang S."/>
            <person name="Wei H."/>
            <person name="Liu B."/>
            <person name="Lei M."/>
            <person name="Yu H."/>
            <person name="Li Y."/>
            <person name="Xu H."/>
            <person name="Wei S."/>
            <person name="He X."/>
            <person name="Fang L."/>
            <person name="Zhang Z."/>
            <person name="Zhang Y."/>
            <person name="Huang X."/>
            <person name="Su Z."/>
            <person name="Tong W."/>
            <person name="Li J."/>
            <person name="Tong Z."/>
            <person name="Li S."/>
            <person name="Ye J."/>
            <person name="Wang L."/>
            <person name="Fang L."/>
            <person name="Lei T."/>
            <person name="Chen C.-S."/>
            <person name="Chen H.-C."/>
            <person name="Xu Z."/>
            <person name="Li H."/>
            <person name="Huang H."/>
            <person name="Zhang F."/>
            <person name="Xu H."/>
            <person name="Li N."/>
            <person name="Zhao C."/>
            <person name="Li S."/>
            <person name="Dong L."/>
            <person name="Huang Y."/>
            <person name="Li L."/>
            <person name="Xi Y."/>
            <person name="Qi Q."/>
            <person name="Li W."/>
            <person name="Zhang B."/>
            <person name="Hu W."/>
            <person name="Zhang Y."/>
            <person name="Tian X."/>
            <person name="Jiao Y."/>
            <person name="Liang X."/>
            <person name="Jin J."/>
            <person name="Gao L."/>
            <person name="Zheng W."/>
            <person name="Hao B."/>
            <person name="Liu S.-M."/>
            <person name="Wang W."/>
            <person name="Yuan L."/>
            <person name="Cao M."/>
            <person name="McDermott J."/>
            <person name="Samudrala R."/>
            <person name="Wang J."/>
            <person name="Wong G.K.-S."/>
            <person name="Yang H."/>
        </authorList>
    </citation>
    <scope>NUCLEOTIDE SEQUENCE [LARGE SCALE GENOMIC DNA]</scope>
    <source>
        <strain>cv. Nipponbare</strain>
    </source>
</reference>
<reference key="6">
    <citation type="journal article" date="2003" name="Science">
        <title>Collection, mapping, and annotation of over 28,000 cDNA clones from japonica rice.</title>
        <authorList>
            <consortium name="The rice full-length cDNA consortium"/>
        </authorList>
    </citation>
    <scope>NUCLEOTIDE SEQUENCE [LARGE SCALE MRNA]</scope>
    <source>
        <strain>cv. Nipponbare</strain>
    </source>
</reference>
<reference key="7">
    <citation type="journal article" date="2002" name="Sci. China, Ser. C, Life Sci.">
        <title>Putative cytochrome P450 genes in rice genome (Oryza sativa L. ssp. indica) and their EST evidence.</title>
        <authorList>
            <person name="Zhong L."/>
            <person name="Wang K."/>
            <person name="Tan J."/>
            <person name="Li W."/>
            <person name="Li S."/>
        </authorList>
    </citation>
    <scope>GENE FAMILY</scope>
    <scope>NOMENCLATURE</scope>
</reference>
<reference key="8">
    <citation type="journal article" date="2007" name="J. Biol. Chem.">
        <title>Identification of a biosynthetic gene cluster in rice for momilactones.</title>
        <authorList>
            <person name="Shimura K."/>
            <person name="Okada A."/>
            <person name="Okada K."/>
            <person name="Jikumaru Y."/>
            <person name="Ko K.-W."/>
            <person name="Toyomasu T."/>
            <person name="Sassa T."/>
            <person name="Hasegawa M."/>
            <person name="Kodama O."/>
            <person name="Shibuya N."/>
            <person name="Koga J."/>
            <person name="Nojiri H."/>
            <person name="Yamane H."/>
        </authorList>
    </citation>
    <scope>FUNCTION</scope>
    <scope>INDUCTION</scope>
</reference>
<reference key="9">
    <citation type="journal article" date="2011" name="Plant J.">
        <title>CYP99A3: functional identification of a diterpene oxidase from the momilactone biosynthetic gene cluster in rice.</title>
        <authorList>
            <person name="Wang Q."/>
            <person name="Hillwig M.L."/>
            <person name="Peters R.J."/>
        </authorList>
    </citation>
    <scope>FUNCTION</scope>
    <scope>CATALYTIC ACTIVITY</scope>
    <scope>BIOPHYSICOCHEMICAL PROPERTIES</scope>
    <scope>INDUCTION BY JASMONIC ACID</scope>
</reference>
<feature type="chain" id="PRO_0000349107" description="9-beta-pimara-7,15-diene oxidase">
    <location>
        <begin position="1"/>
        <end position="502"/>
    </location>
</feature>
<feature type="transmembrane region" description="Helical" evidence="2">
    <location>
        <begin position="4"/>
        <end position="26"/>
    </location>
</feature>
<feature type="transmembrane region" description="Helical" evidence="2">
    <location>
        <begin position="106"/>
        <end position="128"/>
    </location>
</feature>
<feature type="binding site" description="axial binding residue" evidence="1">
    <location>
        <position position="438"/>
    </location>
    <ligand>
        <name>heme</name>
        <dbReference type="ChEBI" id="CHEBI:30413"/>
    </ligand>
    <ligandPart>
        <name>Fe</name>
        <dbReference type="ChEBI" id="CHEBI:18248"/>
    </ligandPart>
</feature>